<sequence length="108" mass="10123">MGCCGCGGCGGGCGGCSGGCGGGCGGGCGGGGCGGGCGSCTTCRCYRVGCCSSCCPCCRGCCGGCCSTPVICCCRRTCSSCGCGYGKGCCQQKGCCQQKCCCQKQCCC</sequence>
<evidence type="ECO:0000303" key="1">
    <source>
    </source>
</evidence>
<evidence type="ECO:0000305" key="2"/>
<evidence type="ECO:0000305" key="3">
    <source>
    </source>
</evidence>
<evidence type="ECO:0000312" key="4">
    <source>
        <dbReference type="HGNC" id="HGNC:34227"/>
    </source>
</evidence>
<feature type="chain" id="PRO_0000445148" description="Small cysteine and glycine repeat-containing protein 8">
    <location>
        <begin position="1"/>
        <end position="108"/>
    </location>
</feature>
<feature type="region of interest" description="12 X 2 AA repeats of CG" evidence="2">
    <location>
        <begin position="4"/>
        <end position="84"/>
    </location>
</feature>
<dbReference type="EMBL" id="AC093762">
    <property type="status" value="NOT_ANNOTATED_CDS"/>
    <property type="molecule type" value="Genomic_DNA"/>
</dbReference>
<dbReference type="CCDS" id="CCDS92960.1"/>
<dbReference type="RefSeq" id="NP_001382338.1">
    <property type="nucleotide sequence ID" value="NM_001395409.1"/>
</dbReference>
<dbReference type="BioMuta" id="ENSG00000284635"/>
<dbReference type="MassIVE" id="A0A286YFG1"/>
<dbReference type="PeptideAtlas" id="A0A286YFG1"/>
<dbReference type="Ensembl" id="ENST00000641981.2">
    <property type="protein sequence ID" value="ENSP00000493156.1"/>
    <property type="gene ID" value="ENSG00000284635.2"/>
</dbReference>
<dbReference type="GeneID" id="112441432"/>
<dbReference type="MANE-Select" id="ENST00000641981.2">
    <property type="protein sequence ID" value="ENSP00000493156.1"/>
    <property type="RefSeq nucleotide sequence ID" value="NM_001395409.1"/>
    <property type="RefSeq protein sequence ID" value="NP_001382338.1"/>
</dbReference>
<dbReference type="AGR" id="HGNC:34227"/>
<dbReference type="GeneCards" id="SCYGR8"/>
<dbReference type="HGNC" id="HGNC:34227">
    <property type="gene designation" value="SCYGR8"/>
</dbReference>
<dbReference type="HPA" id="ENSG00000284635">
    <property type="expression patterns" value="Not detected"/>
</dbReference>
<dbReference type="neXtProt" id="NX_A0A286YFG1"/>
<dbReference type="VEuPathDB" id="HostDB:ENSG00000284635"/>
<dbReference type="GeneTree" id="ENSGT00950000183378"/>
<dbReference type="InParanoid" id="A0A286YFG1"/>
<dbReference type="OMA" id="GPVLPCM"/>
<dbReference type="PAN-GO" id="A0A286YFG1">
    <property type="GO annotations" value="0 GO annotations based on evolutionary models"/>
</dbReference>
<dbReference type="Pharos" id="A0A286YFG1">
    <property type="development level" value="Tdark"/>
</dbReference>
<dbReference type="PRO" id="PR:A0A286YFG1"/>
<dbReference type="Proteomes" id="UP000005640">
    <property type="component" value="Chromosome 2"/>
</dbReference>
<dbReference type="Bgee" id="ENSG00000284635">
    <property type="expression patterns" value="Expressed in skin of abdomen and 3 other cell types or tissues"/>
</dbReference>
<dbReference type="GO" id="GO:0005882">
    <property type="term" value="C:intermediate filament"/>
    <property type="evidence" value="ECO:0007669"/>
    <property type="project" value="UniProtKB-KW"/>
</dbReference>
<gene>
    <name evidence="4" type="primary">SCYGR8</name>
    <name evidence="1" type="synonym">KRTAP28-8</name>
</gene>
<reference key="1">
    <citation type="journal article" date="2005" name="Nature">
        <title>Generation and annotation of the DNA sequences of human chromosomes 2 and 4.</title>
        <authorList>
            <person name="Hillier L.W."/>
            <person name="Graves T.A."/>
            <person name="Fulton R.S."/>
            <person name="Fulton L.A."/>
            <person name="Pepin K.H."/>
            <person name="Minx P."/>
            <person name="Wagner-McPherson C."/>
            <person name="Layman D."/>
            <person name="Wylie K."/>
            <person name="Sekhon M."/>
            <person name="Becker M.C."/>
            <person name="Fewell G.A."/>
            <person name="Delehaunty K.D."/>
            <person name="Miner T.L."/>
            <person name="Nash W.E."/>
            <person name="Kremitzki C."/>
            <person name="Oddy L."/>
            <person name="Du H."/>
            <person name="Sun H."/>
            <person name="Bradshaw-Cordum H."/>
            <person name="Ali J."/>
            <person name="Carter J."/>
            <person name="Cordes M."/>
            <person name="Harris A."/>
            <person name="Isak A."/>
            <person name="van Brunt A."/>
            <person name="Nguyen C."/>
            <person name="Du F."/>
            <person name="Courtney L."/>
            <person name="Kalicki J."/>
            <person name="Ozersky P."/>
            <person name="Abbott S."/>
            <person name="Armstrong J."/>
            <person name="Belter E.A."/>
            <person name="Caruso L."/>
            <person name="Cedroni M."/>
            <person name="Cotton M."/>
            <person name="Davidson T."/>
            <person name="Desai A."/>
            <person name="Elliott G."/>
            <person name="Erb T."/>
            <person name="Fronick C."/>
            <person name="Gaige T."/>
            <person name="Haakenson W."/>
            <person name="Haglund K."/>
            <person name="Holmes A."/>
            <person name="Harkins R."/>
            <person name="Kim K."/>
            <person name="Kruchowski S.S."/>
            <person name="Strong C.M."/>
            <person name="Grewal N."/>
            <person name="Goyea E."/>
            <person name="Hou S."/>
            <person name="Levy A."/>
            <person name="Martinka S."/>
            <person name="Mead K."/>
            <person name="McLellan M.D."/>
            <person name="Meyer R."/>
            <person name="Randall-Maher J."/>
            <person name="Tomlinson C."/>
            <person name="Dauphin-Kohlberg S."/>
            <person name="Kozlowicz-Reilly A."/>
            <person name="Shah N."/>
            <person name="Swearengen-Shahid S."/>
            <person name="Snider J."/>
            <person name="Strong J.T."/>
            <person name="Thompson J."/>
            <person name="Yoakum M."/>
            <person name="Leonard S."/>
            <person name="Pearman C."/>
            <person name="Trani L."/>
            <person name="Radionenko M."/>
            <person name="Waligorski J.E."/>
            <person name="Wang C."/>
            <person name="Rock S.M."/>
            <person name="Tin-Wollam A.-M."/>
            <person name="Maupin R."/>
            <person name="Latreille P."/>
            <person name="Wendl M.C."/>
            <person name="Yang S.-P."/>
            <person name="Pohl C."/>
            <person name="Wallis J.W."/>
            <person name="Spieth J."/>
            <person name="Bieri T.A."/>
            <person name="Berkowicz N."/>
            <person name="Nelson J.O."/>
            <person name="Osborne J."/>
            <person name="Ding L."/>
            <person name="Meyer R."/>
            <person name="Sabo A."/>
            <person name="Shotland Y."/>
            <person name="Sinha P."/>
            <person name="Wohldmann P.E."/>
            <person name="Cook L.L."/>
            <person name="Hickenbotham M.T."/>
            <person name="Eldred J."/>
            <person name="Williams D."/>
            <person name="Jones T.A."/>
            <person name="She X."/>
            <person name="Ciccarelli F.D."/>
            <person name="Izaurralde E."/>
            <person name="Taylor J."/>
            <person name="Schmutz J."/>
            <person name="Myers R.M."/>
            <person name="Cox D.R."/>
            <person name="Huang X."/>
            <person name="McPherson J.D."/>
            <person name="Mardis E.R."/>
            <person name="Clifton S.W."/>
            <person name="Warren W.C."/>
            <person name="Chinwalla A.T."/>
            <person name="Eddy S.R."/>
            <person name="Marra M.A."/>
            <person name="Ovcharenko I."/>
            <person name="Furey T.S."/>
            <person name="Miller W."/>
            <person name="Eichler E.E."/>
            <person name="Bork P."/>
            <person name="Suyama M."/>
            <person name="Torrents D."/>
            <person name="Waterston R.H."/>
            <person name="Wilson R.K."/>
        </authorList>
    </citation>
    <scope>NUCLEOTIDE SEQUENCE [LARGE SCALE GENOMIC DNA]</scope>
</reference>
<reference key="2">
    <citation type="journal article" date="2008" name="BMC Evol. Biol.">
        <title>Molecular evolution of the keratin associated protein gene family in mammals, role in the evolution of mammalian hair.</title>
        <authorList>
            <person name="Wu D.D."/>
            <person name="Irwin D.M."/>
            <person name="Zhang Y.P."/>
        </authorList>
    </citation>
    <scope>FAMILY CHARACTERIZATION</scope>
</reference>
<accession>A0A286YFG1</accession>
<protein>
    <recommendedName>
        <fullName evidence="2">Small cysteine and glycine repeat-containing protein 8</fullName>
    </recommendedName>
    <alternativeName>
        <fullName evidence="1">Keratin-associated protein 28-8</fullName>
    </alternativeName>
</protein>
<comment type="function">
    <text evidence="2">In the hair cortex, hair keratin intermediate filaments are embedded in an interfilamentous matrix, consisting of hair keratin-associated proteins (KRTAP), which are essential for the formation of a rigid and resistant hair shaft through their extensive disulfide bond cross-linking with abundant cysteine residues of hair keratins. The matrix proteins include the high-sulfur and high-glycine-tyrosine keratins.</text>
</comment>
<comment type="miscellaneous">
    <text evidence="1">Human have a similar number of genes as other primates despite the relative hairlessness of humans.</text>
</comment>
<comment type="similarity">
    <text evidence="3">Belongs to the KRTAP type 28 family.</text>
</comment>
<organism>
    <name type="scientific">Homo sapiens</name>
    <name type="common">Human</name>
    <dbReference type="NCBI Taxonomy" id="9606"/>
    <lineage>
        <taxon>Eukaryota</taxon>
        <taxon>Metazoa</taxon>
        <taxon>Chordata</taxon>
        <taxon>Craniata</taxon>
        <taxon>Vertebrata</taxon>
        <taxon>Euteleostomi</taxon>
        <taxon>Mammalia</taxon>
        <taxon>Eutheria</taxon>
        <taxon>Euarchontoglires</taxon>
        <taxon>Primates</taxon>
        <taxon>Haplorrhini</taxon>
        <taxon>Catarrhini</taxon>
        <taxon>Hominidae</taxon>
        <taxon>Homo</taxon>
    </lineage>
</organism>
<proteinExistence type="evidence at protein level"/>
<name>SCGR8_HUMAN</name>
<keyword id="KW-0416">Keratin</keyword>
<keyword id="KW-1185">Reference proteome</keyword>
<keyword id="KW-0677">Repeat</keyword>